<reference key="1">
    <citation type="journal article" date="2005" name="J. Bacteriol.">
        <title>Whole-genome sequencing of Staphylococcus haemolyticus uncovers the extreme plasticity of its genome and the evolution of human-colonizing staphylococcal species.</title>
        <authorList>
            <person name="Takeuchi F."/>
            <person name="Watanabe S."/>
            <person name="Baba T."/>
            <person name="Yuzawa H."/>
            <person name="Ito T."/>
            <person name="Morimoto Y."/>
            <person name="Kuroda M."/>
            <person name="Cui L."/>
            <person name="Takahashi M."/>
            <person name="Ankai A."/>
            <person name="Baba S."/>
            <person name="Fukui S."/>
            <person name="Lee J.C."/>
            <person name="Hiramatsu K."/>
        </authorList>
    </citation>
    <scope>NUCLEOTIDE SEQUENCE [LARGE SCALE GENOMIC DNA]</scope>
    <source>
        <strain>JCSC1435</strain>
    </source>
</reference>
<accession>Q4L5Q7</accession>
<feature type="chain" id="PRO_0000110744" description="Orotate phosphoribosyltransferase">
    <location>
        <begin position="1"/>
        <end position="202"/>
    </location>
</feature>
<feature type="binding site" evidence="1">
    <location>
        <position position="94"/>
    </location>
    <ligand>
        <name>5-phospho-alpha-D-ribose 1-diphosphate</name>
        <dbReference type="ChEBI" id="CHEBI:58017"/>
        <note>ligand shared between dimeric partners</note>
    </ligand>
</feature>
<feature type="binding site" evidence="1">
    <location>
        <position position="98"/>
    </location>
    <ligand>
        <name>5-phospho-alpha-D-ribose 1-diphosphate</name>
        <dbReference type="ChEBI" id="CHEBI:58017"/>
        <note>ligand shared between dimeric partners</note>
    </ligand>
</feature>
<feature type="binding site" evidence="1">
    <location>
        <position position="100"/>
    </location>
    <ligand>
        <name>5-phospho-alpha-D-ribose 1-diphosphate</name>
        <dbReference type="ChEBI" id="CHEBI:58017"/>
        <note>ligand shared between dimeric partners</note>
    </ligand>
</feature>
<feature type="binding site" description="in other chain" evidence="1">
    <location>
        <begin position="120"/>
        <end position="128"/>
    </location>
    <ligand>
        <name>5-phospho-alpha-D-ribose 1-diphosphate</name>
        <dbReference type="ChEBI" id="CHEBI:58017"/>
        <note>ligand shared between dimeric partners</note>
    </ligand>
</feature>
<feature type="binding site" evidence="1">
    <location>
        <position position="124"/>
    </location>
    <ligand>
        <name>orotate</name>
        <dbReference type="ChEBI" id="CHEBI:30839"/>
    </ligand>
</feature>
<sequence>MAKEIAKSLLDIEAVTLSPNDLYTWSSGIKSPIYCDNRVTLGYPEVRRAIRDGLSQMIIEQFGNVDIVSGTATAGIPHAAYISEKLNLPMNYVRSKSKSHGKQNQIEGAVSKGKKVVVVEDLISTGGSSITAVEALKDAGADVLGVVAIFTYGLKKADDMFNEIDVPFYTLSNYNELIEVAREEGKISENDIQTLVEWRDNL</sequence>
<gene>
    <name evidence="1" type="primary">pyrE</name>
    <name type="ordered locus">SH1709</name>
</gene>
<proteinExistence type="inferred from homology"/>
<evidence type="ECO:0000255" key="1">
    <source>
        <dbReference type="HAMAP-Rule" id="MF_01208"/>
    </source>
</evidence>
<protein>
    <recommendedName>
        <fullName evidence="1">Orotate phosphoribosyltransferase</fullName>
        <shortName evidence="1">OPRT</shortName>
        <shortName evidence="1">OPRTase</shortName>
        <ecNumber evidence="1">2.4.2.10</ecNumber>
    </recommendedName>
</protein>
<organism>
    <name type="scientific">Staphylococcus haemolyticus (strain JCSC1435)</name>
    <dbReference type="NCBI Taxonomy" id="279808"/>
    <lineage>
        <taxon>Bacteria</taxon>
        <taxon>Bacillati</taxon>
        <taxon>Bacillota</taxon>
        <taxon>Bacilli</taxon>
        <taxon>Bacillales</taxon>
        <taxon>Staphylococcaceae</taxon>
        <taxon>Staphylococcus</taxon>
    </lineage>
</organism>
<name>PYRE_STAHJ</name>
<keyword id="KW-0328">Glycosyltransferase</keyword>
<keyword id="KW-0460">Magnesium</keyword>
<keyword id="KW-0665">Pyrimidine biosynthesis</keyword>
<keyword id="KW-0808">Transferase</keyword>
<comment type="function">
    <text evidence="1">Catalyzes the transfer of a ribosyl phosphate group from 5-phosphoribose 1-diphosphate to orotate, leading to the formation of orotidine monophosphate (OMP).</text>
</comment>
<comment type="catalytic activity">
    <reaction evidence="1">
        <text>orotidine 5'-phosphate + diphosphate = orotate + 5-phospho-alpha-D-ribose 1-diphosphate</text>
        <dbReference type="Rhea" id="RHEA:10380"/>
        <dbReference type="ChEBI" id="CHEBI:30839"/>
        <dbReference type="ChEBI" id="CHEBI:33019"/>
        <dbReference type="ChEBI" id="CHEBI:57538"/>
        <dbReference type="ChEBI" id="CHEBI:58017"/>
        <dbReference type="EC" id="2.4.2.10"/>
    </reaction>
</comment>
<comment type="cofactor">
    <cofactor evidence="1">
        <name>Mg(2+)</name>
        <dbReference type="ChEBI" id="CHEBI:18420"/>
    </cofactor>
</comment>
<comment type="pathway">
    <text evidence="1">Pyrimidine metabolism; UMP biosynthesis via de novo pathway; UMP from orotate: step 1/2.</text>
</comment>
<comment type="subunit">
    <text evidence="1">Homodimer.</text>
</comment>
<comment type="similarity">
    <text evidence="1">Belongs to the purine/pyrimidine phosphoribosyltransferase family. PyrE subfamily.</text>
</comment>
<dbReference type="EC" id="2.4.2.10" evidence="1"/>
<dbReference type="EMBL" id="AP006716">
    <property type="protein sequence ID" value="BAE05018.1"/>
    <property type="molecule type" value="Genomic_DNA"/>
</dbReference>
<dbReference type="RefSeq" id="WP_011275994.1">
    <property type="nucleotide sequence ID" value="NC_007168.1"/>
</dbReference>
<dbReference type="SMR" id="Q4L5Q7"/>
<dbReference type="GeneID" id="93781087"/>
<dbReference type="KEGG" id="sha:SH1709"/>
<dbReference type="eggNOG" id="COG0461">
    <property type="taxonomic scope" value="Bacteria"/>
</dbReference>
<dbReference type="HOGENOM" id="CLU_074878_1_1_9"/>
<dbReference type="OrthoDB" id="9802134at2"/>
<dbReference type="UniPathway" id="UPA00070">
    <property type="reaction ID" value="UER00119"/>
</dbReference>
<dbReference type="Proteomes" id="UP000000543">
    <property type="component" value="Chromosome"/>
</dbReference>
<dbReference type="GO" id="GO:0000287">
    <property type="term" value="F:magnesium ion binding"/>
    <property type="evidence" value="ECO:0007669"/>
    <property type="project" value="UniProtKB-UniRule"/>
</dbReference>
<dbReference type="GO" id="GO:0004588">
    <property type="term" value="F:orotate phosphoribosyltransferase activity"/>
    <property type="evidence" value="ECO:0007669"/>
    <property type="project" value="UniProtKB-UniRule"/>
</dbReference>
<dbReference type="GO" id="GO:0044205">
    <property type="term" value="P:'de novo' UMP biosynthetic process"/>
    <property type="evidence" value="ECO:0007669"/>
    <property type="project" value="UniProtKB-UniRule"/>
</dbReference>
<dbReference type="GO" id="GO:0019856">
    <property type="term" value="P:pyrimidine nucleobase biosynthetic process"/>
    <property type="evidence" value="ECO:0007669"/>
    <property type="project" value="TreeGrafter"/>
</dbReference>
<dbReference type="CDD" id="cd06223">
    <property type="entry name" value="PRTases_typeI"/>
    <property type="match status" value="1"/>
</dbReference>
<dbReference type="Gene3D" id="3.40.50.2020">
    <property type="match status" value="1"/>
</dbReference>
<dbReference type="HAMAP" id="MF_01208">
    <property type="entry name" value="PyrE"/>
    <property type="match status" value="1"/>
</dbReference>
<dbReference type="InterPro" id="IPR023031">
    <property type="entry name" value="OPRT"/>
</dbReference>
<dbReference type="InterPro" id="IPR004467">
    <property type="entry name" value="Or_phspho_trans_dom"/>
</dbReference>
<dbReference type="InterPro" id="IPR000836">
    <property type="entry name" value="PRibTrfase_dom"/>
</dbReference>
<dbReference type="InterPro" id="IPR029057">
    <property type="entry name" value="PRTase-like"/>
</dbReference>
<dbReference type="NCBIfam" id="TIGR00336">
    <property type="entry name" value="pyrE"/>
    <property type="match status" value="1"/>
</dbReference>
<dbReference type="PANTHER" id="PTHR19278">
    <property type="entry name" value="OROTATE PHOSPHORIBOSYLTRANSFERASE"/>
    <property type="match status" value="1"/>
</dbReference>
<dbReference type="PANTHER" id="PTHR19278:SF9">
    <property type="entry name" value="URIDINE 5'-MONOPHOSPHATE SYNTHASE"/>
    <property type="match status" value="1"/>
</dbReference>
<dbReference type="Pfam" id="PF00156">
    <property type="entry name" value="Pribosyltran"/>
    <property type="match status" value="1"/>
</dbReference>
<dbReference type="SUPFAM" id="SSF53271">
    <property type="entry name" value="PRTase-like"/>
    <property type="match status" value="1"/>
</dbReference>
<dbReference type="PROSITE" id="PS00103">
    <property type="entry name" value="PUR_PYR_PR_TRANSFER"/>
    <property type="match status" value="1"/>
</dbReference>